<evidence type="ECO:0000250" key="1">
    <source>
        <dbReference type="UniProtKB" id="P58681"/>
    </source>
</evidence>
<evidence type="ECO:0000255" key="2"/>
<evidence type="ECO:0000255" key="3">
    <source>
        <dbReference type="PROSITE-ProRule" id="PRU00204"/>
    </source>
</evidence>
<evidence type="ECO:0000269" key="4">
    <source>
    </source>
</evidence>
<evidence type="ECO:0000269" key="5">
    <source>
    </source>
</evidence>
<evidence type="ECO:0000269" key="6">
    <source>
    </source>
</evidence>
<evidence type="ECO:0000269" key="7">
    <source>
    </source>
</evidence>
<evidence type="ECO:0000269" key="8">
    <source>
    </source>
</evidence>
<evidence type="ECO:0000269" key="9">
    <source>
    </source>
</evidence>
<evidence type="ECO:0000269" key="10">
    <source>
    </source>
</evidence>
<evidence type="ECO:0000269" key="11">
    <source>
    </source>
</evidence>
<evidence type="ECO:0000269" key="12">
    <source>
    </source>
</evidence>
<evidence type="ECO:0000269" key="13">
    <source>
    </source>
</evidence>
<evidence type="ECO:0000305" key="14"/>
<evidence type="ECO:0000312" key="15">
    <source>
        <dbReference type="HGNC" id="HGNC:15631"/>
    </source>
</evidence>
<evidence type="ECO:0007744" key="16">
    <source>
        <dbReference type="PDB" id="7CYN"/>
    </source>
</evidence>
<proteinExistence type="evidence at protein level"/>
<feature type="signal peptide" evidence="2">
    <location>
        <begin position="1"/>
        <end position="26"/>
    </location>
</feature>
<feature type="chain" id="PRO_0000034733" description="Toll-like receptor 7">
    <location>
        <begin position="27"/>
        <end position="1049"/>
    </location>
</feature>
<feature type="topological domain" description="Extracellular" evidence="2">
    <location>
        <begin position="27"/>
        <end position="839"/>
    </location>
</feature>
<feature type="transmembrane region" description="Helical" evidence="2">
    <location>
        <begin position="840"/>
        <end position="860"/>
    </location>
</feature>
<feature type="topological domain" description="Cytoplasmic" evidence="2">
    <location>
        <begin position="861"/>
        <end position="1049"/>
    </location>
</feature>
<feature type="repeat" description="LRR 1">
    <location>
        <begin position="43"/>
        <end position="64"/>
    </location>
</feature>
<feature type="repeat" description="LRR 2">
    <location>
        <begin position="65"/>
        <end position="87"/>
    </location>
</feature>
<feature type="repeat" description="LRR 3">
    <location>
        <begin position="110"/>
        <end position="126"/>
    </location>
</feature>
<feature type="repeat" description="LRR 4">
    <location>
        <begin position="127"/>
        <end position="149"/>
    </location>
</feature>
<feature type="repeat" description="LRR 5">
    <location>
        <begin position="151"/>
        <end position="170"/>
    </location>
</feature>
<feature type="repeat" description="LRR 6">
    <location>
        <begin position="171"/>
        <end position="195"/>
    </location>
</feature>
<feature type="repeat" description="LRR 7">
    <location>
        <begin position="203"/>
        <end position="226"/>
    </location>
</feature>
<feature type="repeat" description="LRR 8">
    <location>
        <begin position="228"/>
        <end position="247"/>
    </location>
</feature>
<feature type="repeat" description="LRR 9">
    <location>
        <begin position="248"/>
        <end position="275"/>
    </location>
</feature>
<feature type="repeat" description="LRR 10">
    <location>
        <begin position="289"/>
        <end position="312"/>
    </location>
</feature>
<feature type="repeat" description="LRR 11">
    <location>
        <begin position="314"/>
        <end position="337"/>
    </location>
</feature>
<feature type="repeat" description="LRR 12">
    <location>
        <begin position="339"/>
        <end position="368"/>
    </location>
</feature>
<feature type="repeat" description="LRR 13">
    <location>
        <begin position="369"/>
        <end position="392"/>
    </location>
</feature>
<feature type="repeat" description="LRR 14">
    <location>
        <begin position="396"/>
        <end position="419"/>
    </location>
</feature>
<feature type="repeat" description="LRR 15">
    <location>
        <begin position="421"/>
        <end position="443"/>
    </location>
</feature>
<feature type="repeat" description="LRR 16">
    <location>
        <begin position="492"/>
        <end position="515"/>
    </location>
</feature>
<feature type="repeat" description="LRR 17">
    <location>
        <begin position="516"/>
        <end position="540"/>
    </location>
</feature>
<feature type="repeat" description="LRR 18">
    <location>
        <begin position="541"/>
        <end position="564"/>
    </location>
</feature>
<feature type="repeat" description="LRR 19">
    <location>
        <begin position="566"/>
        <end position="588"/>
    </location>
</feature>
<feature type="repeat" description="LRR 20">
    <location>
        <begin position="595"/>
        <end position="618"/>
    </location>
</feature>
<feature type="repeat" description="LRR 21">
    <location>
        <begin position="619"/>
        <end position="644"/>
    </location>
</feature>
<feature type="repeat" description="LRR 22">
    <location>
        <begin position="649"/>
        <end position="672"/>
    </location>
</feature>
<feature type="repeat" description="LRR 23">
    <location>
        <begin position="674"/>
        <end position="697"/>
    </location>
</feature>
<feature type="repeat" description="LRR 24">
    <location>
        <begin position="698"/>
        <end position="721"/>
    </location>
</feature>
<feature type="repeat" description="LRR 25">
    <location>
        <begin position="723"/>
        <end position="745"/>
    </location>
</feature>
<feature type="repeat" description="LRR 26">
    <location>
        <begin position="746"/>
        <end position="769"/>
    </location>
</feature>
<feature type="repeat" description="LRR 27">
    <location>
        <begin position="772"/>
        <end position="795"/>
    </location>
</feature>
<feature type="domain" description="TIR" evidence="3">
    <location>
        <begin position="889"/>
        <end position="1033"/>
    </location>
</feature>
<feature type="glycosylation site" description="N-linked (GlcNAc...) asparagine" evidence="2">
    <location>
        <position position="66"/>
    </location>
</feature>
<feature type="glycosylation site" description="N-linked (GlcNAc...) asparagine" evidence="2">
    <location>
        <position position="69"/>
    </location>
</feature>
<feature type="glycosylation site" description="N-linked (GlcNAc...) asparagine" evidence="2">
    <location>
        <position position="167"/>
    </location>
</feature>
<feature type="glycosylation site" description="N-linked (GlcNAc...) asparagine" evidence="2">
    <location>
        <position position="202"/>
    </location>
</feature>
<feature type="glycosylation site" description="N-linked (GlcNAc...) asparagine" evidence="2">
    <location>
        <position position="215"/>
    </location>
</feature>
<feature type="glycosylation site" description="N-linked (GlcNAc...) asparagine" evidence="2">
    <location>
        <position position="361"/>
    </location>
</feature>
<feature type="glycosylation site" description="N-linked (GlcNAc...) asparagine" evidence="2">
    <location>
        <position position="413"/>
    </location>
</feature>
<feature type="glycosylation site" description="N-linked (GlcNAc...) asparagine" evidence="2">
    <location>
        <position position="488"/>
    </location>
</feature>
<feature type="glycosylation site" description="N-linked (GlcNAc...) asparagine" evidence="2">
    <location>
        <position position="523"/>
    </location>
</feature>
<feature type="glycosylation site" description="N-linked (GlcNAc...) asparagine" evidence="2">
    <location>
        <position position="534"/>
    </location>
</feature>
<feature type="glycosylation site" description="N-linked (GlcNAc...) asparagine" evidence="2">
    <location>
        <position position="590"/>
    </location>
</feature>
<feature type="glycosylation site" description="N-linked (GlcNAc...) asparagine" evidence="2">
    <location>
        <position position="679"/>
    </location>
</feature>
<feature type="glycosylation site" description="N-linked (GlcNAc...) asparagine" evidence="2">
    <location>
        <position position="720"/>
    </location>
</feature>
<feature type="glycosylation site" description="N-linked (GlcNAc...) asparagine" evidence="2">
    <location>
        <position position="799"/>
    </location>
</feature>
<feature type="sequence variant" id="VAR_034554" description="In dbSNP:rs179008." evidence="6">
    <original>Q</original>
    <variation>L</variation>
    <location>
        <position position="11"/>
    </location>
</feature>
<feature type="sequence variant" id="VAR_087534" description="In SLEB17; increased NFKB1 activation after stimulation with guanosine and ssRNA; dbSNP:rs2147245261." evidence="12">
    <original>R</original>
    <variation>G</variation>
    <location>
        <position position="28"/>
    </location>
</feature>
<feature type="sequence variant" id="VAR_087535" description="In SLEB17; increased NFKB1 activation after stimulation with cGMP; dbSNP:rs2147245558." evidence="12">
    <original>Y</original>
    <variation>H</variation>
    <location>
        <position position="264"/>
    </location>
</feature>
<feature type="sequence variant" id="VAR_024665" description="In dbSNP:rs5743781.">
    <original>A</original>
    <variation>V</variation>
    <location>
        <position position="448"/>
    </location>
</feature>
<feature type="sequence variant" id="VAR_087536" description="In SLEB17; increased NFKB1 activation after stimulation with cGMP; dbSNP:rs2147245859." evidence="12">
    <original>F</original>
    <variation>L</variation>
    <location>
        <position position="507"/>
    </location>
</feature>
<feature type="sequence variant" id="VAR_084629" description="In IMD74; no enhanced expression after stimulation by imiquimod; defective up-regulation of type I IFN-related genes; decreased expression of IFNG; dbSNP:rs200553089." evidence="10">
    <original>V</original>
    <variation>F</variation>
    <location>
        <position position="795"/>
    </location>
</feature>
<feature type="sequence conflict" description="In Ref. 2; AAF78035." evidence="14" ref="2">
    <original>L</original>
    <variation>H</variation>
    <location>
        <position position="725"/>
    </location>
</feature>
<feature type="sequence conflict" description="In Ref. 2; AAF78035." evidence="14" ref="2">
    <original>L</original>
    <variation>P</variation>
    <location>
        <position position="738"/>
    </location>
</feature>
<reference key="1">
    <citation type="journal article" date="2000" name="Eur. Cytokine Netw.">
        <title>Three novel mammalian Toll-like receptors: gene structure, expression, and evolution.</title>
        <authorList>
            <person name="Du X."/>
            <person name="Poltorak A."/>
            <person name="Wei Y."/>
            <person name="Beutler B."/>
        </authorList>
    </citation>
    <scope>NUCLEOTIDE SEQUENCE [MRNA]</scope>
    <source>
        <tissue>Placenta</tissue>
    </source>
</reference>
<reference key="2">
    <citation type="journal article" date="2000" name="Eur. Cytokine Netw.">
        <title>Cloning and characterization of a sub-family of human Toll-like receptors: hTLR7, hTLR8 and hTLR9.</title>
        <authorList>
            <person name="Chuang T.-H."/>
            <person name="Ulevitch R.J."/>
        </authorList>
    </citation>
    <scope>NUCLEOTIDE SEQUENCE [MRNA]</scope>
    <source>
        <tissue>Placenta</tissue>
    </source>
</reference>
<reference key="3">
    <citation type="journal article" date="2009" name="PLoS ONE">
        <title>The heterogeneous allelic repertoire of human Toll-Like receptor (TLR) genes.</title>
        <authorList>
            <person name="Georgel P."/>
            <person name="Macquin C."/>
            <person name="Bahram S."/>
        </authorList>
    </citation>
    <scope>NUCLEOTIDE SEQUENCE [GENOMIC DNA]</scope>
    <scope>VARIANT LEU-11</scope>
</reference>
<reference key="4">
    <citation type="journal article" date="2003" name="Genome Res.">
        <title>The secreted protein discovery initiative (SPDI), a large-scale effort to identify novel human secreted and transmembrane proteins: a bioinformatics assessment.</title>
        <authorList>
            <person name="Clark H.F."/>
            <person name="Gurney A.L."/>
            <person name="Abaya E."/>
            <person name="Baker K."/>
            <person name="Baldwin D.T."/>
            <person name="Brush J."/>
            <person name="Chen J."/>
            <person name="Chow B."/>
            <person name="Chui C."/>
            <person name="Crowley C."/>
            <person name="Currell B."/>
            <person name="Deuel B."/>
            <person name="Dowd P."/>
            <person name="Eaton D."/>
            <person name="Foster J.S."/>
            <person name="Grimaldi C."/>
            <person name="Gu Q."/>
            <person name="Hass P.E."/>
            <person name="Heldens S."/>
            <person name="Huang A."/>
            <person name="Kim H.S."/>
            <person name="Klimowski L."/>
            <person name="Jin Y."/>
            <person name="Johnson S."/>
            <person name="Lee J."/>
            <person name="Lewis L."/>
            <person name="Liao D."/>
            <person name="Mark M.R."/>
            <person name="Robbie E."/>
            <person name="Sanchez C."/>
            <person name="Schoenfeld J."/>
            <person name="Seshagiri S."/>
            <person name="Simmons L."/>
            <person name="Singh J."/>
            <person name="Smith V."/>
            <person name="Stinson J."/>
            <person name="Vagts A."/>
            <person name="Vandlen R.L."/>
            <person name="Watanabe C."/>
            <person name="Wieand D."/>
            <person name="Woods K."/>
            <person name="Xie M.-H."/>
            <person name="Yansura D.G."/>
            <person name="Yi S."/>
            <person name="Yu G."/>
            <person name="Yuan J."/>
            <person name="Zhang M."/>
            <person name="Zhang Z."/>
            <person name="Goddard A.D."/>
            <person name="Wood W.I."/>
            <person name="Godowski P.J."/>
            <person name="Gray A.M."/>
        </authorList>
    </citation>
    <scope>NUCLEOTIDE SEQUENCE [LARGE SCALE MRNA]</scope>
</reference>
<reference key="5">
    <citation type="journal article" date="2004" name="Genome Res.">
        <title>The status, quality, and expansion of the NIH full-length cDNA project: the Mammalian Gene Collection (MGC).</title>
        <authorList>
            <consortium name="The MGC Project Team"/>
        </authorList>
    </citation>
    <scope>NUCLEOTIDE SEQUENCE [LARGE SCALE MRNA]</scope>
    <source>
        <tissue>Testis</tissue>
    </source>
</reference>
<reference key="6">
    <citation type="journal article" date="2003" name="Proc. Natl. Acad. Sci. U.S.A.">
        <title>Molecular basis for the immunostimulatory activity of guanine nucleoside analogs: activation of Toll-like receptor 7.</title>
        <authorList>
            <person name="Lee J."/>
            <person name="Chuang T.H."/>
            <person name="Redecke V."/>
            <person name="She L."/>
            <person name="Pitha P.M."/>
            <person name="Carson D.A."/>
            <person name="Raz E."/>
            <person name="Cottam H.B."/>
        </authorList>
    </citation>
    <scope>FUNCTION</scope>
    <scope>ACTIVITY REGULATION</scope>
</reference>
<reference key="7">
    <citation type="journal article" date="2004" name="Science">
        <title>Innate antiviral responses by means of TLR7-mediated recognition of single-stranded RNA.</title>
        <authorList>
            <person name="Diebold S.S."/>
            <person name="Kaisho T."/>
            <person name="Hemmi H."/>
            <person name="Akira S."/>
            <person name="Reis e Sousa C."/>
        </authorList>
    </citation>
    <scope>FUNCTION</scope>
</reference>
<reference key="8">
    <citation type="journal article" date="2008" name="J. Immunol.">
        <title>TLR7 is involved in sequence-specific sensing of single-stranded RNAs in human macrophages.</title>
        <authorList>
            <person name="Gantier M.P."/>
            <person name="Tong S."/>
            <person name="Behlke M.A."/>
            <person name="Xu D."/>
            <person name="Phipps S."/>
            <person name="Foster P.S."/>
            <person name="Williams B.R."/>
        </authorList>
    </citation>
    <scope>FUNCTION</scope>
</reference>
<reference key="9">
    <citation type="journal article" date="2016" name="Immunity">
        <title>Structural Analysis Reveals that Toll-like Receptor 7 Is a Dual Receptor for Guanosine and Single-Stranded RNA.</title>
        <authorList>
            <person name="Zhang Z."/>
            <person name="Ohto U."/>
            <person name="Shibata T."/>
            <person name="Krayukhina E."/>
            <person name="Taoka M."/>
            <person name="Yamauchi Y."/>
            <person name="Tanji H."/>
            <person name="Isobe T."/>
            <person name="Uchiyama S."/>
            <person name="Miyake K."/>
            <person name="Shimizu T."/>
        </authorList>
    </citation>
    <scope>FUNCTION</scope>
    <scope>SUBUNIT</scope>
    <scope>DOMAIN</scope>
</reference>
<reference key="10">
    <citation type="journal article" date="2020" name="Eur. J. Immunol.">
        <title>Deoxyguanosine is a TLR7 agonist.</title>
        <authorList>
            <person name="Davenne T."/>
            <person name="Bridgeman A."/>
            <person name="Rigby R.E."/>
            <person name="Rehwinkel J."/>
        </authorList>
    </citation>
    <scope>FUNCTION</scope>
    <scope>ACTIVITY REGULATION</scope>
</reference>
<reference key="11">
    <citation type="journal article" date="2020" name="Nature">
        <title>TASL is the SLC15A4-associated adaptor for IRF5 activation by TLR7-9.</title>
        <authorList>
            <person name="Heinz L.X."/>
            <person name="Lee J."/>
            <person name="Kapoor U."/>
            <person name="Kartnig F."/>
            <person name="Sedlyarov V."/>
            <person name="Papakostas K."/>
            <person name="Cesar-Razquin A."/>
            <person name="Essletzbichler P."/>
            <person name="Goldmann U."/>
            <person name="Stefanovic A."/>
            <person name="Bigenzahn J.W."/>
            <person name="Scorzoni S."/>
            <person name="Pizzagalli M.D."/>
            <person name="Bensimon A."/>
            <person name="Mueller A.C."/>
            <person name="King F.J."/>
            <person name="Li J."/>
            <person name="Girardi E."/>
            <person name="Mbow M.L."/>
            <person name="Whitehurst C.E."/>
            <person name="Rebsamen M."/>
            <person name="Superti-Furga G."/>
        </authorList>
    </citation>
    <scope>FUNCTION</scope>
</reference>
<reference key="12">
    <citation type="journal article" date="2024" name="Immunity">
        <title>Lysosomal endonuclease RNase T2 and PLD exonucleases cooperatively generate RNA ligands for TLR7 activation.</title>
        <authorList>
            <person name="Berouti M."/>
            <person name="Lammens K."/>
            <person name="Heiss M."/>
            <person name="Hansbauer L."/>
            <person name="Bauernfried S."/>
            <person name="Stoeckl J."/>
            <person name="Pinci F."/>
            <person name="Piseddu I."/>
            <person name="Greulich W."/>
            <person name="Wang M."/>
            <person name="Jung C."/>
            <person name="Froehlich T."/>
            <person name="Carell T."/>
            <person name="Hopfner K.P."/>
            <person name="Hornung V."/>
        </authorList>
    </citation>
    <scope>FUNCTION</scope>
</reference>
<reference key="13">
    <citation type="journal article" date="2020" name="JAMA">
        <title>Presence of Genetic Variants Among Young Men With Severe COVID-19.</title>
        <authorList>
            <person name="van der Made C.I."/>
            <person name="Simons A."/>
            <person name="Schuurs-Hoeijmakers J."/>
            <person name="van den Heuvel G."/>
            <person name="Mantere T."/>
            <person name="Kersten S."/>
            <person name="van Deuren R.C."/>
            <person name="Steehouwer M."/>
            <person name="van Reijmersdal S.V."/>
            <person name="Jaeger M."/>
            <person name="Hofste T."/>
            <person name="Astuti G."/>
            <person name="Corominas Galbany J."/>
            <person name="van der Schoot V."/>
            <person name="van der Hoeven H."/>
            <person name="Hagmolen Of Ten Have W."/>
            <person name="Klijn E."/>
            <person name="van den Meer C."/>
            <person name="Fiddelaers J."/>
            <person name="de Mast Q."/>
            <person name="Bleeker-Rovers C.P."/>
            <person name="Joosten L.A.B."/>
            <person name="Yntema H.G."/>
            <person name="Gilissen C."/>
            <person name="Nelen M."/>
            <person name="van der Meer J.W.M."/>
            <person name="Brunner H.G."/>
            <person name="Netea M.G."/>
            <person name="van de Veerdonk F.L."/>
            <person name="Hoischen A."/>
        </authorList>
    </citation>
    <scope>FUNCTION</scope>
    <scope>INVOLVEMENT IN IMD74</scope>
    <scope>VARIANT IMD74 PHE-795</scope>
    <scope>CHARACTERIZATION OF VARIANT IMD74 PHE-795</scope>
    <scope>ACTIVITY REGULATION</scope>
</reference>
<reference key="14">
    <citation type="journal article" date="2022" name="Nature">
        <title>TLR7 gain-of-function genetic variation causes human lupus.</title>
        <authorList>
            <person name="Brown G.J."/>
            <person name="Canete P.F."/>
            <person name="Wang H."/>
            <person name="Medhavy A."/>
            <person name="Bones J."/>
            <person name="Roco J.A."/>
            <person name="He Y."/>
            <person name="Qin Y."/>
            <person name="Cappello J."/>
            <person name="Ellyard J.I."/>
            <person name="Bassett K."/>
            <person name="Shen Q."/>
            <person name="Burgio G."/>
            <person name="Zhang Y."/>
            <person name="Turnbull C."/>
            <person name="Meng X."/>
            <person name="Wu P."/>
            <person name="Cho E."/>
            <person name="Miosge L.A."/>
            <person name="Andrews T.D."/>
            <person name="Field M.A."/>
            <person name="Tvorogov D."/>
            <person name="Lopez A.F."/>
            <person name="Babon J.J."/>
            <person name="Lopez C.A."/>
            <person name="Gonzalez-Murillo A."/>
            <person name="Garulo D.C."/>
            <person name="Pascual V."/>
            <person name="Levy T."/>
            <person name="Mallack E.J."/>
            <person name="Calame D.G."/>
            <person name="Lotze T."/>
            <person name="Lupski J.R."/>
            <person name="Ding H."/>
            <person name="Ullah T.R."/>
            <person name="Walters G.D."/>
            <person name="Koina M.E."/>
            <person name="Cook M.C."/>
            <person name="Shen N."/>
            <person name="de Lucas Collantes C."/>
            <person name="Corry B."/>
            <person name="Gantier M.P."/>
            <person name="Athanasopoulos V."/>
            <person name="Vinuesa C.G."/>
        </authorList>
    </citation>
    <scope>INVOLVEMENT IN SLEB17</scope>
    <scope>VARIANTS SLEB17 GLY-28; HIS-264 AND LEU-507</scope>
    <scope>CHARACTERIZATION OF VARIANTS SLEB17 GLY-28; HIS-264 AND LEU-507</scope>
    <scope>FUNCTION</scope>
    <scope>ACTIVITY REGULATION</scope>
</reference>
<reference evidence="16" key="15">
    <citation type="journal article" date="2021" name="Nat. Struct. Mol. Biol.">
        <title>Cryo-EM structures of Toll-like receptors in complex with UNC93B1.</title>
        <authorList>
            <person name="Ishida H."/>
            <person name="Asami J."/>
            <person name="Zhang Z."/>
            <person name="Nishizawa T."/>
            <person name="Shigematsu H."/>
            <person name="Ohto U."/>
            <person name="Shimizu T."/>
        </authorList>
    </citation>
    <scope>STRUCTURE BY ELECTRON MICROSCOPY (4.20 ANGSTROMS) IN COMPLEX WITH UNC93B1</scope>
    <scope>INTERACTION WITH UNC93B1</scope>
</reference>
<dbReference type="EMBL" id="AF240467">
    <property type="protein sequence ID" value="AAF60188.1"/>
    <property type="molecule type" value="mRNA"/>
</dbReference>
<dbReference type="EMBL" id="AF245702">
    <property type="protein sequence ID" value="AAF78035.1"/>
    <property type="molecule type" value="mRNA"/>
</dbReference>
<dbReference type="EMBL" id="DQ022185">
    <property type="protein sequence ID" value="AAZ99026.1"/>
    <property type="molecule type" value="Genomic_DNA"/>
</dbReference>
<dbReference type="EMBL" id="AY358292">
    <property type="protein sequence ID" value="AAQ88659.1"/>
    <property type="molecule type" value="mRNA"/>
</dbReference>
<dbReference type="EMBL" id="BC033651">
    <property type="protein sequence ID" value="AAH33651.1"/>
    <property type="molecule type" value="mRNA"/>
</dbReference>
<dbReference type="CCDS" id="CCDS14151.1"/>
<dbReference type="RefSeq" id="NP_057646.1">
    <property type="nucleotide sequence ID" value="NM_016562.4"/>
</dbReference>
<dbReference type="PDB" id="7CYN">
    <property type="method" value="EM"/>
    <property type="resolution" value="4.20 A"/>
    <property type="chains" value="A/B=1-1049"/>
</dbReference>
<dbReference type="PDBsum" id="7CYN"/>
<dbReference type="EMDB" id="EMD-30501"/>
<dbReference type="SMR" id="Q9NYK1"/>
<dbReference type="BioGRID" id="119436">
    <property type="interactions" value="30"/>
</dbReference>
<dbReference type="CORUM" id="Q9NYK1"/>
<dbReference type="FunCoup" id="Q9NYK1">
    <property type="interactions" value="122"/>
</dbReference>
<dbReference type="IntAct" id="Q9NYK1">
    <property type="interactions" value="18"/>
</dbReference>
<dbReference type="STRING" id="9606.ENSP00000370034"/>
<dbReference type="BindingDB" id="Q9NYK1"/>
<dbReference type="ChEMBL" id="CHEMBL5936"/>
<dbReference type="DrugBank" id="DB16580">
    <property type="generic name" value="Afimetoran"/>
</dbReference>
<dbReference type="DrugBank" id="DB05127">
    <property type="generic name" value="ANA971"/>
</dbReference>
<dbReference type="DrugBank" id="DB06490">
    <property type="generic name" value="ANA975"/>
</dbReference>
<dbReference type="DrugBank" id="DB14868">
    <property type="generic name" value="AZD-8848"/>
</dbReference>
<dbReference type="DrugBank" id="DB12476">
    <property type="generic name" value="CPG-52852"/>
</dbReference>
<dbReference type="DrugBank" id="DB05475">
    <property type="generic name" value="Golotimod"/>
</dbReference>
<dbReference type="DrugBank" id="DB16076">
    <property type="generic name" value="GSK2245035"/>
</dbReference>
<dbReference type="DrugBank" id="DB01611">
    <property type="generic name" value="Hydroxychloroquine"/>
</dbReference>
<dbReference type="DrugBank" id="DB00724">
    <property type="generic name" value="Imiquimod"/>
</dbReference>
<dbReference type="DrugBank" id="DB04860">
    <property type="generic name" value="Isatoribine"/>
</dbReference>
<dbReference type="DrugBank" id="DB17589">
    <property type="generic name" value="Loxoribine"/>
</dbReference>
<dbReference type="DrugBank" id="DB06530">
    <property type="generic name" value="Resiquimod"/>
</dbReference>
<dbReference type="DrugBank" id="DB06329">
    <property type="generic name" value="RG-7795"/>
</dbReference>
<dbReference type="DrugBank" id="DB12687">
    <property type="generic name" value="Vesatolimod"/>
</dbReference>
<dbReference type="DrugCentral" id="Q9NYK1"/>
<dbReference type="GuidetoPHARMACOLOGY" id="1757"/>
<dbReference type="GlyCosmos" id="Q9NYK1">
    <property type="glycosylation" value="14 sites, No reported glycans"/>
</dbReference>
<dbReference type="GlyGen" id="Q9NYK1">
    <property type="glycosylation" value="14 sites, 3 N-linked glycans (1 site)"/>
</dbReference>
<dbReference type="iPTMnet" id="Q9NYK1"/>
<dbReference type="PhosphoSitePlus" id="Q9NYK1"/>
<dbReference type="BioMuta" id="TLR7"/>
<dbReference type="DMDM" id="20140876"/>
<dbReference type="MassIVE" id="Q9NYK1"/>
<dbReference type="PaxDb" id="9606-ENSP00000370034"/>
<dbReference type="PeptideAtlas" id="Q9NYK1"/>
<dbReference type="ProteomicsDB" id="83240"/>
<dbReference type="Antibodypedia" id="8500">
    <property type="antibodies" value="1022 antibodies from 45 providers"/>
</dbReference>
<dbReference type="DNASU" id="51284"/>
<dbReference type="Ensembl" id="ENST00000380659.4">
    <property type="protein sequence ID" value="ENSP00000370034.3"/>
    <property type="gene ID" value="ENSG00000196664.5"/>
</dbReference>
<dbReference type="GeneID" id="51284"/>
<dbReference type="KEGG" id="hsa:51284"/>
<dbReference type="MANE-Select" id="ENST00000380659.4">
    <property type="protein sequence ID" value="ENSP00000370034.3"/>
    <property type="RefSeq nucleotide sequence ID" value="NM_016562.4"/>
    <property type="RefSeq protein sequence ID" value="NP_057646.1"/>
</dbReference>
<dbReference type="UCSC" id="uc004cvc.4">
    <property type="organism name" value="human"/>
</dbReference>
<dbReference type="AGR" id="HGNC:15631"/>
<dbReference type="CTD" id="51284"/>
<dbReference type="DisGeNET" id="51284"/>
<dbReference type="GeneCards" id="TLR7"/>
<dbReference type="HGNC" id="HGNC:15631">
    <property type="gene designation" value="TLR7"/>
</dbReference>
<dbReference type="HPA" id="ENSG00000196664">
    <property type="expression patterns" value="Tissue enhanced (placenta)"/>
</dbReference>
<dbReference type="MalaCards" id="TLR7"/>
<dbReference type="MIM" id="300365">
    <property type="type" value="gene"/>
</dbReference>
<dbReference type="MIM" id="301051">
    <property type="type" value="phenotype"/>
</dbReference>
<dbReference type="MIM" id="301080">
    <property type="type" value="phenotype"/>
</dbReference>
<dbReference type="neXtProt" id="NX_Q9NYK1"/>
<dbReference type="OpenTargets" id="ENSG00000196664"/>
<dbReference type="Orphanet" id="536">
    <property type="disease" value="Systemic lupus erythematosus"/>
</dbReference>
<dbReference type="PharmGKB" id="PA38008"/>
<dbReference type="VEuPathDB" id="HostDB:ENSG00000196664"/>
<dbReference type="eggNOG" id="KOG4641">
    <property type="taxonomic scope" value="Eukaryota"/>
</dbReference>
<dbReference type="GeneTree" id="ENSGT00940000159771"/>
<dbReference type="HOGENOM" id="CLU_006000_2_0_1"/>
<dbReference type="InParanoid" id="Q9NYK1"/>
<dbReference type="OMA" id="CNSKYLR"/>
<dbReference type="OrthoDB" id="10006997at2759"/>
<dbReference type="PAN-GO" id="Q9NYK1">
    <property type="GO annotations" value="6 GO annotations based on evolutionary models"/>
</dbReference>
<dbReference type="PhylomeDB" id="Q9NYK1"/>
<dbReference type="TreeFam" id="TF325595"/>
<dbReference type="PathwayCommons" id="Q9NYK1"/>
<dbReference type="Reactome" id="R-HSA-1679131">
    <property type="pathway name" value="Trafficking and processing of endosomal TLR"/>
</dbReference>
<dbReference type="Reactome" id="R-HSA-168181">
    <property type="pathway name" value="Toll Like Receptor 7/8 (TLR7/8) Cascade"/>
</dbReference>
<dbReference type="Reactome" id="R-HSA-5686938">
    <property type="pathway name" value="Regulation of TLR by endogenous ligand"/>
</dbReference>
<dbReference type="Reactome" id="R-HSA-9679191">
    <property type="pathway name" value="Potential therapeutics for SARS"/>
</dbReference>
<dbReference type="Reactome" id="R-HSA-9692916">
    <property type="pathway name" value="SARS-CoV-1 activates/modulates innate immune responses"/>
</dbReference>
<dbReference type="Reactome" id="R-HSA-9705671">
    <property type="pathway name" value="SARS-CoV-2 activates/modulates innate and adaptive immune responses"/>
</dbReference>
<dbReference type="Reactome" id="R-HSA-975110">
    <property type="pathway name" value="TRAF6 mediated IRF7 activation in TLR7/8 or 9 signaling"/>
</dbReference>
<dbReference type="Reactome" id="R-HSA-975138">
    <property type="pathway name" value="TRAF6 mediated induction of NFkB and MAP kinases upon TLR7/8 or 9 activation"/>
</dbReference>
<dbReference type="Reactome" id="R-HSA-975155">
    <property type="pathway name" value="MyD88 dependent cascade initiated on endosome"/>
</dbReference>
<dbReference type="Reactome" id="R-HSA-9824856">
    <property type="pathway name" value="Defective regulation of TLR7 by endogenous ligand"/>
</dbReference>
<dbReference type="Reactome" id="R-HSA-9833110">
    <property type="pathway name" value="RSV-host interactions"/>
</dbReference>
<dbReference type="SignaLink" id="Q9NYK1"/>
<dbReference type="SIGNOR" id="Q9NYK1"/>
<dbReference type="BioGRID-ORCS" id="51284">
    <property type="hits" value="11 hits in 774 CRISPR screens"/>
</dbReference>
<dbReference type="ChiTaRS" id="TLR7">
    <property type="organism name" value="human"/>
</dbReference>
<dbReference type="GeneWiki" id="TLR_7"/>
<dbReference type="GenomeRNAi" id="51284"/>
<dbReference type="Pharos" id="Q9NYK1">
    <property type="development level" value="Tclin"/>
</dbReference>
<dbReference type="PRO" id="PR:Q9NYK1"/>
<dbReference type="Proteomes" id="UP000005640">
    <property type="component" value="Chromosome X"/>
</dbReference>
<dbReference type="RNAct" id="Q9NYK1">
    <property type="molecule type" value="protein"/>
</dbReference>
<dbReference type="Bgee" id="ENSG00000196664">
    <property type="expression patterns" value="Expressed in monocyte and 117 other cell types or tissues"/>
</dbReference>
<dbReference type="ExpressionAtlas" id="Q9NYK1">
    <property type="expression patterns" value="baseline and differential"/>
</dbReference>
<dbReference type="GO" id="GO:0005737">
    <property type="term" value="C:cytoplasm"/>
    <property type="evidence" value="ECO:0000314"/>
    <property type="project" value="BHF-UCL"/>
</dbReference>
<dbReference type="GO" id="GO:0032009">
    <property type="term" value="C:early phagosome"/>
    <property type="evidence" value="ECO:0000250"/>
    <property type="project" value="UniProtKB"/>
</dbReference>
<dbReference type="GO" id="GO:0036020">
    <property type="term" value="C:endolysosome membrane"/>
    <property type="evidence" value="ECO:0000304"/>
    <property type="project" value="Reactome"/>
</dbReference>
<dbReference type="GO" id="GO:0005783">
    <property type="term" value="C:endoplasmic reticulum"/>
    <property type="evidence" value="ECO:0000250"/>
    <property type="project" value="UniProtKB"/>
</dbReference>
<dbReference type="GO" id="GO:0005789">
    <property type="term" value="C:endoplasmic reticulum membrane"/>
    <property type="evidence" value="ECO:0000304"/>
    <property type="project" value="Reactome"/>
</dbReference>
<dbReference type="GO" id="GO:0005768">
    <property type="term" value="C:endosome"/>
    <property type="evidence" value="ECO:0000250"/>
    <property type="project" value="UniProtKB"/>
</dbReference>
<dbReference type="GO" id="GO:0010008">
    <property type="term" value="C:endosome membrane"/>
    <property type="evidence" value="ECO:0000304"/>
    <property type="project" value="Reactome"/>
</dbReference>
<dbReference type="GO" id="GO:0000139">
    <property type="term" value="C:Golgi membrane"/>
    <property type="evidence" value="ECO:0000304"/>
    <property type="project" value="Reactome"/>
</dbReference>
<dbReference type="GO" id="GO:0005764">
    <property type="term" value="C:lysosome"/>
    <property type="evidence" value="ECO:0000250"/>
    <property type="project" value="UniProtKB"/>
</dbReference>
<dbReference type="GO" id="GO:0005886">
    <property type="term" value="C:plasma membrane"/>
    <property type="evidence" value="ECO:0000314"/>
    <property type="project" value="BHF-UCL"/>
</dbReference>
<dbReference type="GO" id="GO:0043235">
    <property type="term" value="C:receptor complex"/>
    <property type="evidence" value="ECO:0000314"/>
    <property type="project" value="MGI"/>
</dbReference>
<dbReference type="GO" id="GO:0003725">
    <property type="term" value="F:double-stranded RNA binding"/>
    <property type="evidence" value="ECO:0000314"/>
    <property type="project" value="UniProtKB"/>
</dbReference>
<dbReference type="GO" id="GO:0038187">
    <property type="term" value="F:pattern recognition receptor activity"/>
    <property type="evidence" value="ECO:0000318"/>
    <property type="project" value="GO_Central"/>
</dbReference>
<dbReference type="GO" id="GO:0003727">
    <property type="term" value="F:single-stranded RNA binding"/>
    <property type="evidence" value="ECO:0000315"/>
    <property type="project" value="UniProtKB"/>
</dbReference>
<dbReference type="GO" id="GO:0035197">
    <property type="term" value="F:siRNA binding"/>
    <property type="evidence" value="ECO:0000250"/>
    <property type="project" value="UniProtKB"/>
</dbReference>
<dbReference type="GO" id="GO:0007249">
    <property type="term" value="P:canonical NF-kappaB signal transduction"/>
    <property type="evidence" value="ECO:0000315"/>
    <property type="project" value="UniProtKB"/>
</dbReference>
<dbReference type="GO" id="GO:0071260">
    <property type="term" value="P:cellular response to mechanical stimulus"/>
    <property type="evidence" value="ECO:0000270"/>
    <property type="project" value="UniProtKB"/>
</dbReference>
<dbReference type="GO" id="GO:0098586">
    <property type="term" value="P:cellular response to virus"/>
    <property type="evidence" value="ECO:0007669"/>
    <property type="project" value="Ensembl"/>
</dbReference>
<dbReference type="GO" id="GO:0051607">
    <property type="term" value="P:defense response to virus"/>
    <property type="evidence" value="ECO:0000315"/>
    <property type="project" value="UniProtKB"/>
</dbReference>
<dbReference type="GO" id="GO:0006954">
    <property type="term" value="P:inflammatory response"/>
    <property type="evidence" value="ECO:0007669"/>
    <property type="project" value="UniProtKB-KW"/>
</dbReference>
<dbReference type="GO" id="GO:0045087">
    <property type="term" value="P:innate immune response"/>
    <property type="evidence" value="ECO:0000315"/>
    <property type="project" value="UniProtKB"/>
</dbReference>
<dbReference type="GO" id="GO:0007254">
    <property type="term" value="P:JNK cascade"/>
    <property type="evidence" value="ECO:0007669"/>
    <property type="project" value="Ensembl"/>
</dbReference>
<dbReference type="GO" id="GO:0043123">
    <property type="term" value="P:positive regulation of canonical NF-kappaB signal transduction"/>
    <property type="evidence" value="ECO:0000314"/>
    <property type="project" value="GO_Central"/>
</dbReference>
<dbReference type="GO" id="GO:0032722">
    <property type="term" value="P:positive regulation of chemokine production"/>
    <property type="evidence" value="ECO:0000314"/>
    <property type="project" value="BHF-UCL"/>
</dbReference>
<dbReference type="GO" id="GO:0050729">
    <property type="term" value="P:positive regulation of inflammatory response"/>
    <property type="evidence" value="ECO:0000314"/>
    <property type="project" value="BHF-UCL"/>
</dbReference>
<dbReference type="GO" id="GO:0032727">
    <property type="term" value="P:positive regulation of interferon-alpha production"/>
    <property type="evidence" value="ECO:0000314"/>
    <property type="project" value="UniProtKB"/>
</dbReference>
<dbReference type="GO" id="GO:0032728">
    <property type="term" value="P:positive regulation of interferon-beta production"/>
    <property type="evidence" value="ECO:0000314"/>
    <property type="project" value="UniProtKB"/>
</dbReference>
<dbReference type="GO" id="GO:0032755">
    <property type="term" value="P:positive regulation of interleukin-6 production"/>
    <property type="evidence" value="ECO:0000318"/>
    <property type="project" value="GO_Central"/>
</dbReference>
<dbReference type="GO" id="GO:0032757">
    <property type="term" value="P:positive regulation of interleukin-8 production"/>
    <property type="evidence" value="ECO:0000314"/>
    <property type="project" value="BHF-UCL"/>
</dbReference>
<dbReference type="GO" id="GO:0060907">
    <property type="term" value="P:positive regulation of macrophage cytokine production"/>
    <property type="evidence" value="ECO:0007669"/>
    <property type="project" value="Ensembl"/>
</dbReference>
<dbReference type="GO" id="GO:0045944">
    <property type="term" value="P:positive regulation of transcription by RNA polymerase II"/>
    <property type="evidence" value="ECO:0007669"/>
    <property type="project" value="Ensembl"/>
</dbReference>
<dbReference type="GO" id="GO:0032729">
    <property type="term" value="P:positive regulation of type II interferon production"/>
    <property type="evidence" value="ECO:0000314"/>
    <property type="project" value="UniProtKB"/>
</dbReference>
<dbReference type="GO" id="GO:0070305">
    <property type="term" value="P:response to cGMP"/>
    <property type="evidence" value="ECO:0000315"/>
    <property type="project" value="UniProtKB"/>
</dbReference>
<dbReference type="GO" id="GO:0034154">
    <property type="term" value="P:toll-like receptor 7 signaling pathway"/>
    <property type="evidence" value="ECO:0000314"/>
    <property type="project" value="GO_Central"/>
</dbReference>
<dbReference type="GO" id="GO:0034158">
    <property type="term" value="P:toll-like receptor 8 signaling pathway"/>
    <property type="evidence" value="ECO:0007669"/>
    <property type="project" value="Ensembl"/>
</dbReference>
<dbReference type="GO" id="GO:0002224">
    <property type="term" value="P:toll-like receptor signaling pathway"/>
    <property type="evidence" value="ECO:0000318"/>
    <property type="project" value="GO_Central"/>
</dbReference>
<dbReference type="FunFam" id="3.40.50.10140:FF:000003">
    <property type="entry name" value="Toll-like receptor 7"/>
    <property type="match status" value="1"/>
</dbReference>
<dbReference type="FunFam" id="3.80.10.10:FF:000037">
    <property type="entry name" value="Toll-like receptor 7"/>
    <property type="match status" value="1"/>
</dbReference>
<dbReference type="Gene3D" id="3.80.10.10">
    <property type="entry name" value="Ribonuclease Inhibitor"/>
    <property type="match status" value="1"/>
</dbReference>
<dbReference type="Gene3D" id="3.40.50.10140">
    <property type="entry name" value="Toll/interleukin-1 receptor homology (TIR) domain"/>
    <property type="match status" value="1"/>
</dbReference>
<dbReference type="InterPro" id="IPR000483">
    <property type="entry name" value="Cys-rich_flank_reg_C"/>
</dbReference>
<dbReference type="InterPro" id="IPR001611">
    <property type="entry name" value="Leu-rich_rpt"/>
</dbReference>
<dbReference type="InterPro" id="IPR003591">
    <property type="entry name" value="Leu-rich_rpt_typical-subtyp"/>
</dbReference>
<dbReference type="InterPro" id="IPR032675">
    <property type="entry name" value="LRR_dom_sf"/>
</dbReference>
<dbReference type="InterPro" id="IPR000157">
    <property type="entry name" value="TIR_dom"/>
</dbReference>
<dbReference type="InterPro" id="IPR035897">
    <property type="entry name" value="Toll_tir_struct_dom_sf"/>
</dbReference>
<dbReference type="PANTHER" id="PTHR47410:SF2">
    <property type="entry name" value="TOLL-LIKE RECEPTOR 7"/>
    <property type="match status" value="1"/>
</dbReference>
<dbReference type="PANTHER" id="PTHR47410">
    <property type="entry name" value="TOLL-LIKE RECEPTOR 7-RELATED"/>
    <property type="match status" value="1"/>
</dbReference>
<dbReference type="Pfam" id="PF13855">
    <property type="entry name" value="LRR_8"/>
    <property type="match status" value="3"/>
</dbReference>
<dbReference type="Pfam" id="PF01582">
    <property type="entry name" value="TIR"/>
    <property type="match status" value="1"/>
</dbReference>
<dbReference type="PRINTS" id="PR00019">
    <property type="entry name" value="LEURICHRPT"/>
</dbReference>
<dbReference type="SMART" id="SM00365">
    <property type="entry name" value="LRR_SD22"/>
    <property type="match status" value="9"/>
</dbReference>
<dbReference type="SMART" id="SM00369">
    <property type="entry name" value="LRR_TYP"/>
    <property type="match status" value="12"/>
</dbReference>
<dbReference type="SMART" id="SM00082">
    <property type="entry name" value="LRRCT"/>
    <property type="match status" value="1"/>
</dbReference>
<dbReference type="SMART" id="SM00255">
    <property type="entry name" value="TIR"/>
    <property type="match status" value="1"/>
</dbReference>
<dbReference type="SUPFAM" id="SSF52058">
    <property type="entry name" value="L domain-like"/>
    <property type="match status" value="3"/>
</dbReference>
<dbReference type="SUPFAM" id="SSF52200">
    <property type="entry name" value="Toll/Interleukin receptor TIR domain"/>
    <property type="match status" value="1"/>
</dbReference>
<dbReference type="PROSITE" id="PS51450">
    <property type="entry name" value="LRR"/>
    <property type="match status" value="18"/>
</dbReference>
<dbReference type="PROSITE" id="PS50104">
    <property type="entry name" value="TIR"/>
    <property type="match status" value="1"/>
</dbReference>
<organism>
    <name type="scientific">Homo sapiens</name>
    <name type="common">Human</name>
    <dbReference type="NCBI Taxonomy" id="9606"/>
    <lineage>
        <taxon>Eukaryota</taxon>
        <taxon>Metazoa</taxon>
        <taxon>Chordata</taxon>
        <taxon>Craniata</taxon>
        <taxon>Vertebrata</taxon>
        <taxon>Euteleostomi</taxon>
        <taxon>Mammalia</taxon>
        <taxon>Eutheria</taxon>
        <taxon>Euarchontoglires</taxon>
        <taxon>Primates</taxon>
        <taxon>Haplorrhini</taxon>
        <taxon>Catarrhini</taxon>
        <taxon>Hominidae</taxon>
        <taxon>Homo</taxon>
    </lineage>
</organism>
<accession>Q9NYK1</accession>
<accession>D1CS69</accession>
<accession>Q9NR98</accession>
<comment type="function">
    <text evidence="4 5 7 8 9 10 12 13">Endosomal receptor that plays a key role in innate and adaptive immunity (PubMed:14976261, PubMed:32433612). Controls host immune response against pathogens through recognition of uridine-containing single strand RNAs (ssRNAs) of viral origin or guanosine analogs (PubMed:12738885, PubMed:27742543, PubMed:31608988, PubMed:32706371, PubMed:35477763). Upon binding to agonists, undergoes dimerization that brings TIR domains from the two molecules into direct contact, leading to the recruitment of TIR-containing downstream adapter MYD88 through homotypic interaction (PubMed:27742543). In turn, the Myddosome signaling complex is formed involving IRAK4, IRAK1, TRAF6, TRAF3 leading to activation of downstream transcription factors NF-kappa-B and IRF7 to induce pro-inflammatory cytokines and interferons, respectively (PubMed:27742543, PubMed:32706371). In plasmacytoid dendritic cells, RNASET2 endonuclease cooperates with PLD3 or PLD4 5'-&gt;3' exonucleases to process RNA and release 2',3'-cyclic guanosine monophosphate (2',3'-cGMP) and cytidine-rich RNA fragments that occupy TLR7 ligand-binding pockets and trigger a signaling-competent state.</text>
</comment>
<comment type="activity regulation">
    <text evidence="4 8 10 12">Activated by guanosine analogs including deoxyguanosine, 7-thia-8-oxoguanosine or 7-deazaguanosine in a RNA-independent manner. Activated by imiquimod (PubMed:32706371).</text>
</comment>
<comment type="subunit">
    <text evidence="1 7 11 14">Homodimer (PubMed:27742543). Interacts with MYD88 via their respective TIR domains (Probable). Interacts with UNC93B1 (PubMed:33432245). Interacts with SMPDL3B (By similarity).</text>
</comment>
<comment type="subcellular location">
    <subcellularLocation>
        <location evidence="1">Endoplasmic reticulum membrane</location>
        <topology evidence="1">Single-pass type I membrane protein</topology>
    </subcellularLocation>
    <subcellularLocation>
        <location evidence="1">Endosome</location>
    </subcellularLocation>
    <subcellularLocation>
        <location evidence="1">Lysosome</location>
    </subcellularLocation>
    <subcellularLocation>
        <location evidence="1">Cytoplasmic vesicle</location>
        <location evidence="1">Phagosome</location>
    </subcellularLocation>
    <text evidence="1">Relocalizes from endoplasmic reticulum to endosome and lysosome upon stimulation with agonist.</text>
</comment>
<comment type="tissue specificity">
    <text evidence="10">Detected in brain, placenta, spleen, stomach, small intestine, lung and in plasmacytoid pre-dendritic cells. Expressed in peripheral mononuclear blood cells (PubMed:32706371).</text>
</comment>
<comment type="domain">
    <text evidence="7">Contains two binding domains, first site for small ligands and second site for ssRNA.</text>
</comment>
<comment type="disease" evidence="10">
    <disease id="DI-05889">
        <name>Immunodeficiency 74, COVID19-related, X-linked</name>
        <acronym>IMD74</acronym>
        <description>An X-linked recessive immunologic disorder characterized by impaired type I and type II interferon responses due to defective TLR7 signaling. Individuals with TLR7 deficiency develop severe respiratory insufficiency in response to infection with SARS-CoV-2 coronavirus. Death from respiratory failure may occur.</description>
        <dbReference type="MIM" id="301051"/>
    </disease>
    <text>The disease is caused by variants affecting the gene represented in this entry.</text>
</comment>
<comment type="disease" evidence="12">
    <disease id="DI-06410">
        <name>Systemic lupus erythematosus 17</name>
        <acronym>SLEB17</acronym>
        <description>A form of systemic lupus erythematosus, a chronic, relapsing, inflammatory, and often febrile multisystemic disorder of connective tissue, characterized principally by involvement of the skin, joints, kidneys and serosal membranes. The disease is marked by a wide range of system dysfunctions, an elevated erythrocyte sedimentation rate, and the formation of LE cells in the blood or bone marrow. SLEB17 is an X-linked dominant form characterized by onset of systemic autoinflammatory symptoms in the first decades of life.</description>
        <dbReference type="MIM" id="301080"/>
    </disease>
    <text>The disease is caused by variants affecting the gene represented in this entry.</text>
</comment>
<comment type="similarity">
    <text evidence="14">Belongs to the Toll-like receptor family.</text>
</comment>
<name>TLR7_HUMAN</name>
<sequence length="1049" mass="120922">MVFPMWTLKRQILILFNIILISKLLGARWFPKTLPCDVTLDVPKNHVIVDCTDKHLTEIPGGIPTNTTNLTLTINHIPDISPASFHRLDHLVEIDFRCNCVPIPLGSKNNMCIKRLQIKPRSFSGLTYLKSLYLDGNQLLEIPQGLPPSLQLLSLEANNIFSIRKENLTELANIEILYLGQNCYYRNPCYVSYSIEKDAFLNLTKLKVLSLKDNNVTAVPTVLPSTLTELYLYNNMIAKIQEDDFNNLNQLQILDLSGNCPRCYNAPFPCAPCKNNSPLQIPVNAFDALTELKVLRLHSNSLQHVPPRWFKNINKLQELDLSQNFLAKEIGDAKFLHFLPSLIQLDLSFNFELQVYRASMNLSQAFSSLKSLKILRIRGYVFKELKSFNLSPLHNLQNLEVLDLGTNFIKIANLSMFKQFKRLKVIDLSVNKISPSGDSSEVGFCSNARTSVESYEPQVLEQLHYFRYDKYARSCRFKNKEASFMSVNESCYKYGQTLDLSKNSIFFVKSSDFQHLSFLKCLNLSGNLISQTLNGSEFQPLAELRYLDFSNNRLDLLHSTAFEELHKLEVLDISSNSHYFQSEGITHMLNFTKNLKVLQKLMMNDNDISSSTSRTMESESLRTLEFRGNHLDVLWREGDNRYLQLFKNLLKLEELDISKNSLSFLPSGVFDGMPPNLKNLSLAKNGLKSFSWKKLQCLKNLETLDLSHNQLTTVPERLSNCSRSLKNLILKNNQIRSLTKYFLQDAFQLRYLDLSSNKIQMIQKTSFPENVLNNLKMLLLHHNRFLCTCDAVWFVWWVNHTEVTIPYLATDVTCVGPGAHKGQSVISLDLYTCELDLTNLILFSLSISVSLFLMVMMTASHLYFWDVWYIYHFCKAKIKGYQRLISPDCCYDAFIVYDTKDPAVTEWVLAELVAKLEDPREKHFNLCLEERDWLPGQPVLENLSQSIQLSKKTVFVMTDKYAKTENFKIAFYLSHQRLMDEKVDVIILIFLEKPFQKSKFLQLRKRLCGSSVLEWPTNPQAHPYFWQCLKNALATDNHVAYSQVFKETV</sequence>
<keyword id="KW-0002">3D-structure</keyword>
<keyword id="KW-0968">Cytoplasmic vesicle</keyword>
<keyword id="KW-0225">Disease variant</keyword>
<keyword id="KW-0256">Endoplasmic reticulum</keyword>
<keyword id="KW-0967">Endosome</keyword>
<keyword id="KW-0325">Glycoprotein</keyword>
<keyword id="KW-0391">Immunity</keyword>
<keyword id="KW-0395">Inflammatory response</keyword>
<keyword id="KW-0399">Innate immunity</keyword>
<keyword id="KW-0433">Leucine-rich repeat</keyword>
<keyword id="KW-0458">Lysosome</keyword>
<keyword id="KW-0472">Membrane</keyword>
<keyword id="KW-1267">Proteomics identification</keyword>
<keyword id="KW-0675">Receptor</keyword>
<keyword id="KW-1185">Reference proteome</keyword>
<keyword id="KW-0677">Repeat</keyword>
<keyword id="KW-0732">Signal</keyword>
<keyword id="KW-0772">Systemic lupus erythematosus</keyword>
<keyword id="KW-0812">Transmembrane</keyword>
<keyword id="KW-1133">Transmembrane helix</keyword>
<gene>
    <name evidence="15" type="primary">TLR7</name>
    <name type="ORF">UNQ248/PRO285</name>
</gene>
<protein>
    <recommendedName>
        <fullName evidence="14">Toll-like receptor 7</fullName>
    </recommendedName>
</protein>